<evidence type="ECO:0000255" key="1">
    <source>
        <dbReference type="HAMAP-Rule" id="MF_00740"/>
    </source>
</evidence>
<feature type="chain" id="PRO_1000148255" description="Phosphopentomutase">
    <location>
        <begin position="1"/>
        <end position="403"/>
    </location>
</feature>
<feature type="binding site" evidence="1">
    <location>
        <position position="13"/>
    </location>
    <ligand>
        <name>Mn(2+)</name>
        <dbReference type="ChEBI" id="CHEBI:29035"/>
        <label>1</label>
    </ligand>
</feature>
<feature type="binding site" evidence="1">
    <location>
        <position position="298"/>
    </location>
    <ligand>
        <name>Mn(2+)</name>
        <dbReference type="ChEBI" id="CHEBI:29035"/>
        <label>2</label>
    </ligand>
</feature>
<feature type="binding site" evidence="1">
    <location>
        <position position="303"/>
    </location>
    <ligand>
        <name>Mn(2+)</name>
        <dbReference type="ChEBI" id="CHEBI:29035"/>
        <label>2</label>
    </ligand>
</feature>
<feature type="binding site" evidence="1">
    <location>
        <position position="339"/>
    </location>
    <ligand>
        <name>Mn(2+)</name>
        <dbReference type="ChEBI" id="CHEBI:29035"/>
        <label>1</label>
    </ligand>
</feature>
<feature type="binding site" evidence="1">
    <location>
        <position position="340"/>
    </location>
    <ligand>
        <name>Mn(2+)</name>
        <dbReference type="ChEBI" id="CHEBI:29035"/>
        <label>1</label>
    </ligand>
</feature>
<feature type="binding site" evidence="1">
    <location>
        <position position="351"/>
    </location>
    <ligand>
        <name>Mn(2+)</name>
        <dbReference type="ChEBI" id="CHEBI:29035"/>
        <label>2</label>
    </ligand>
</feature>
<organism>
    <name type="scientific">Streptococcus uberis (strain ATCC BAA-854 / 0140J)</name>
    <dbReference type="NCBI Taxonomy" id="218495"/>
    <lineage>
        <taxon>Bacteria</taxon>
        <taxon>Bacillati</taxon>
        <taxon>Bacillota</taxon>
        <taxon>Bacilli</taxon>
        <taxon>Lactobacillales</taxon>
        <taxon>Streptococcaceae</taxon>
        <taxon>Streptococcus</taxon>
    </lineage>
</organism>
<comment type="function">
    <text evidence="1">Isomerase that catalyzes the conversion of deoxy-ribose 1-phosphate (dRib-1-P) and ribose 1-phosphate (Rib-1-P) to deoxy-ribose 5-phosphate (dRib-5-P) and ribose 5-phosphate (Rib-5-P), respectively.</text>
</comment>
<comment type="catalytic activity">
    <reaction evidence="1">
        <text>2-deoxy-alpha-D-ribose 1-phosphate = 2-deoxy-D-ribose 5-phosphate</text>
        <dbReference type="Rhea" id="RHEA:27658"/>
        <dbReference type="ChEBI" id="CHEBI:57259"/>
        <dbReference type="ChEBI" id="CHEBI:62877"/>
        <dbReference type="EC" id="5.4.2.7"/>
    </reaction>
</comment>
<comment type="catalytic activity">
    <reaction evidence="1">
        <text>alpha-D-ribose 1-phosphate = D-ribose 5-phosphate</text>
        <dbReference type="Rhea" id="RHEA:18793"/>
        <dbReference type="ChEBI" id="CHEBI:57720"/>
        <dbReference type="ChEBI" id="CHEBI:78346"/>
        <dbReference type="EC" id="5.4.2.7"/>
    </reaction>
</comment>
<comment type="cofactor">
    <cofactor evidence="1">
        <name>Mn(2+)</name>
        <dbReference type="ChEBI" id="CHEBI:29035"/>
    </cofactor>
    <text evidence="1">Binds 2 manganese ions.</text>
</comment>
<comment type="pathway">
    <text evidence="1">Carbohydrate degradation; 2-deoxy-D-ribose 1-phosphate degradation; D-glyceraldehyde 3-phosphate and acetaldehyde from 2-deoxy-alpha-D-ribose 1-phosphate: step 1/2.</text>
</comment>
<comment type="subcellular location">
    <subcellularLocation>
        <location evidence="1">Cytoplasm</location>
    </subcellularLocation>
</comment>
<comment type="similarity">
    <text evidence="1">Belongs to the phosphopentomutase family.</text>
</comment>
<gene>
    <name evidence="1" type="primary">deoB</name>
    <name type="ordered locus">SUB1049</name>
</gene>
<proteinExistence type="inferred from homology"/>
<reference key="1">
    <citation type="journal article" date="2009" name="BMC Genomics">
        <title>Evidence for niche adaptation in the genome of the bovine pathogen Streptococcus uberis.</title>
        <authorList>
            <person name="Ward P.N."/>
            <person name="Holden M.T.G."/>
            <person name="Leigh J.A."/>
            <person name="Lennard N."/>
            <person name="Bignell A."/>
            <person name="Barron A."/>
            <person name="Clark L."/>
            <person name="Quail M.A."/>
            <person name="Woodward J."/>
            <person name="Barrell B.G."/>
            <person name="Egan S.A."/>
            <person name="Field T.R."/>
            <person name="Maskell D."/>
            <person name="Kehoe M."/>
            <person name="Dowson C.G."/>
            <person name="Chanter N."/>
            <person name="Whatmore A.M."/>
            <person name="Bentley S.D."/>
            <person name="Parkhill J."/>
        </authorList>
    </citation>
    <scope>NUCLEOTIDE SEQUENCE [LARGE SCALE GENOMIC DNA]</scope>
    <source>
        <strain>ATCC BAA-854 / 0140J</strain>
    </source>
</reference>
<name>DEOB_STRU0</name>
<protein>
    <recommendedName>
        <fullName evidence="1">Phosphopentomutase</fullName>
        <ecNumber evidence="1">5.4.2.7</ecNumber>
    </recommendedName>
    <alternativeName>
        <fullName evidence="1">Phosphodeoxyribomutase</fullName>
    </alternativeName>
</protein>
<accession>B9DUK3</accession>
<sequence>MSTFDRIHLVVLDSVGIGAAPDANNFQNAGVPDGASDTLGHISKAVGLDVPNMAKLGLGNIPRPQALKTVAAESNPTGYATKLEEVSLGKDTMTGHWEIMGLNITEPFDTFWNGFPEEILTKIEEFSGRKVIREANKPYSGTAVIDDFGPRQMETGELIIYTSADPVLQIAAHEDIIPLEELYRICEYARSITLERPALLGRIIARPYVGEPGNFTRTSNRHDYAVSPFEDTVLNKLDQAGIDTYAVGKINDIFNGSGINHDMGHNKSNSHGIDTLIKTMGLTAFEKGFSFTNLVDFDALYGHRRDAFGYRDCLHEFDQRLPEILSAMRDNDLLLITADHGNDPTYAGTDHTREFIPLLAYSPSFKGSGVIPQGHFADISATIAENFGVERAMIGQSFLAELK</sequence>
<dbReference type="EC" id="5.4.2.7" evidence="1"/>
<dbReference type="EMBL" id="AM946015">
    <property type="protein sequence ID" value="CAR42336.1"/>
    <property type="molecule type" value="Genomic_DNA"/>
</dbReference>
<dbReference type="RefSeq" id="WP_012658545.1">
    <property type="nucleotide sequence ID" value="NC_012004.1"/>
</dbReference>
<dbReference type="SMR" id="B9DUK3"/>
<dbReference type="STRING" id="218495.SUB1049"/>
<dbReference type="KEGG" id="sub:SUB1049"/>
<dbReference type="eggNOG" id="COG1015">
    <property type="taxonomic scope" value="Bacteria"/>
</dbReference>
<dbReference type="HOGENOM" id="CLU_053861_0_0_9"/>
<dbReference type="OrthoDB" id="9769930at2"/>
<dbReference type="UniPathway" id="UPA00002">
    <property type="reaction ID" value="UER00467"/>
</dbReference>
<dbReference type="Proteomes" id="UP000000449">
    <property type="component" value="Chromosome"/>
</dbReference>
<dbReference type="GO" id="GO:0005829">
    <property type="term" value="C:cytosol"/>
    <property type="evidence" value="ECO:0007669"/>
    <property type="project" value="TreeGrafter"/>
</dbReference>
<dbReference type="GO" id="GO:0000287">
    <property type="term" value="F:magnesium ion binding"/>
    <property type="evidence" value="ECO:0007669"/>
    <property type="project" value="InterPro"/>
</dbReference>
<dbReference type="GO" id="GO:0030145">
    <property type="term" value="F:manganese ion binding"/>
    <property type="evidence" value="ECO:0007669"/>
    <property type="project" value="UniProtKB-UniRule"/>
</dbReference>
<dbReference type="GO" id="GO:0008973">
    <property type="term" value="F:phosphopentomutase activity"/>
    <property type="evidence" value="ECO:0007669"/>
    <property type="project" value="UniProtKB-UniRule"/>
</dbReference>
<dbReference type="GO" id="GO:0006018">
    <property type="term" value="P:2-deoxyribose 1-phosphate catabolic process"/>
    <property type="evidence" value="ECO:0007669"/>
    <property type="project" value="UniProtKB-UniRule"/>
</dbReference>
<dbReference type="GO" id="GO:0006015">
    <property type="term" value="P:5-phosphoribose 1-diphosphate biosynthetic process"/>
    <property type="evidence" value="ECO:0007669"/>
    <property type="project" value="UniProtKB-UniPathway"/>
</dbReference>
<dbReference type="GO" id="GO:0043094">
    <property type="term" value="P:metabolic compound salvage"/>
    <property type="evidence" value="ECO:0007669"/>
    <property type="project" value="InterPro"/>
</dbReference>
<dbReference type="GO" id="GO:0009117">
    <property type="term" value="P:nucleotide metabolic process"/>
    <property type="evidence" value="ECO:0007669"/>
    <property type="project" value="InterPro"/>
</dbReference>
<dbReference type="CDD" id="cd16009">
    <property type="entry name" value="PPM"/>
    <property type="match status" value="1"/>
</dbReference>
<dbReference type="FunFam" id="3.30.70.1250:FF:000001">
    <property type="entry name" value="Phosphopentomutase"/>
    <property type="match status" value="1"/>
</dbReference>
<dbReference type="Gene3D" id="3.40.720.10">
    <property type="entry name" value="Alkaline Phosphatase, subunit A"/>
    <property type="match status" value="1"/>
</dbReference>
<dbReference type="Gene3D" id="3.30.70.1250">
    <property type="entry name" value="Phosphopentomutase"/>
    <property type="match status" value="1"/>
</dbReference>
<dbReference type="HAMAP" id="MF_00740">
    <property type="entry name" value="Phosphopentomut"/>
    <property type="match status" value="1"/>
</dbReference>
<dbReference type="InterPro" id="IPR017850">
    <property type="entry name" value="Alkaline_phosphatase_core_sf"/>
</dbReference>
<dbReference type="InterPro" id="IPR010045">
    <property type="entry name" value="DeoB"/>
</dbReference>
<dbReference type="InterPro" id="IPR006124">
    <property type="entry name" value="Metalloenzyme"/>
</dbReference>
<dbReference type="InterPro" id="IPR024052">
    <property type="entry name" value="Phosphopentomutase_DeoB_cap_sf"/>
</dbReference>
<dbReference type="NCBIfam" id="TIGR01696">
    <property type="entry name" value="deoB"/>
    <property type="match status" value="1"/>
</dbReference>
<dbReference type="NCBIfam" id="NF003766">
    <property type="entry name" value="PRK05362.1"/>
    <property type="match status" value="1"/>
</dbReference>
<dbReference type="PANTHER" id="PTHR21110">
    <property type="entry name" value="PHOSPHOPENTOMUTASE"/>
    <property type="match status" value="1"/>
</dbReference>
<dbReference type="PANTHER" id="PTHR21110:SF0">
    <property type="entry name" value="PHOSPHOPENTOMUTASE"/>
    <property type="match status" value="1"/>
</dbReference>
<dbReference type="Pfam" id="PF01676">
    <property type="entry name" value="Metalloenzyme"/>
    <property type="match status" value="1"/>
</dbReference>
<dbReference type="PIRSF" id="PIRSF001491">
    <property type="entry name" value="Ppentomutase"/>
    <property type="match status" value="1"/>
</dbReference>
<dbReference type="SUPFAM" id="SSF53649">
    <property type="entry name" value="Alkaline phosphatase-like"/>
    <property type="match status" value="1"/>
</dbReference>
<dbReference type="SUPFAM" id="SSF143856">
    <property type="entry name" value="DeoB insert domain-like"/>
    <property type="match status" value="1"/>
</dbReference>
<keyword id="KW-0963">Cytoplasm</keyword>
<keyword id="KW-0413">Isomerase</keyword>
<keyword id="KW-0464">Manganese</keyword>
<keyword id="KW-0479">Metal-binding</keyword>
<keyword id="KW-1185">Reference proteome</keyword>